<comment type="function">
    <text evidence="1">May play a role in photosystem I and II biogenesis.</text>
</comment>
<comment type="subcellular location">
    <subcellularLocation>
        <location evidence="1">Plastid</location>
        <location evidence="1">Chloroplast thylakoid membrane</location>
        <topology evidence="1">Single-pass membrane protein</topology>
    </subcellularLocation>
</comment>
<comment type="similarity">
    <text evidence="1">Belongs to the PsbN family.</text>
</comment>
<comment type="caution">
    <text evidence="1">Originally thought to be a component of PSII; based on experiments in Synechocystis, N.tabacum and barley, and its absence from PSII in T.elongatus and T.vulcanus, this is probably not true.</text>
</comment>
<sequence length="43" mass="4676">METATLIAISISGLIVSFTGYALYTAFGQPSQQLRDPFEEHGD</sequence>
<evidence type="ECO:0000255" key="1">
    <source>
        <dbReference type="HAMAP-Rule" id="MF_00293"/>
    </source>
</evidence>
<proteinExistence type="inferred from homology"/>
<feature type="chain" id="PRO_0000362184" description="Protein PsbN">
    <location>
        <begin position="1"/>
        <end position="43"/>
    </location>
</feature>
<feature type="transmembrane region" description="Helical" evidence="1">
    <location>
        <begin position="5"/>
        <end position="27"/>
    </location>
</feature>
<name>PSBN_CICAR</name>
<geneLocation type="chloroplast"/>
<gene>
    <name evidence="1" type="primary">psbN</name>
</gene>
<keyword id="KW-0150">Chloroplast</keyword>
<keyword id="KW-0472">Membrane</keyword>
<keyword id="KW-0934">Plastid</keyword>
<keyword id="KW-1185">Reference proteome</keyword>
<keyword id="KW-0793">Thylakoid</keyword>
<keyword id="KW-0812">Transmembrane</keyword>
<keyword id="KW-1133">Transmembrane helix</keyword>
<organism>
    <name type="scientific">Cicer arietinum</name>
    <name type="common">Chickpea</name>
    <name type="synonym">Garbanzo</name>
    <dbReference type="NCBI Taxonomy" id="3827"/>
    <lineage>
        <taxon>Eukaryota</taxon>
        <taxon>Viridiplantae</taxon>
        <taxon>Streptophyta</taxon>
        <taxon>Embryophyta</taxon>
        <taxon>Tracheophyta</taxon>
        <taxon>Spermatophyta</taxon>
        <taxon>Magnoliopsida</taxon>
        <taxon>eudicotyledons</taxon>
        <taxon>Gunneridae</taxon>
        <taxon>Pentapetalae</taxon>
        <taxon>rosids</taxon>
        <taxon>fabids</taxon>
        <taxon>Fabales</taxon>
        <taxon>Fabaceae</taxon>
        <taxon>Papilionoideae</taxon>
        <taxon>50 kb inversion clade</taxon>
        <taxon>NPAAA clade</taxon>
        <taxon>Hologalegina</taxon>
        <taxon>IRL clade</taxon>
        <taxon>Cicereae</taxon>
        <taxon>Cicer</taxon>
    </lineage>
</organism>
<protein>
    <recommendedName>
        <fullName evidence="1">Protein PsbN</fullName>
    </recommendedName>
</protein>
<reference key="1">
    <citation type="journal article" date="2008" name="Mol. Phylogenet. Evol.">
        <title>Complete plastid genome sequence of the chickpea (Cicer arietinum) and the phylogenetic distribution of rps12 and clpP intron losses among legumes (Leguminosae).</title>
        <authorList>
            <person name="Jansen R.K."/>
            <person name="Wojciechowski M.F."/>
            <person name="Sanniyasi E."/>
            <person name="Lee S.-B."/>
            <person name="Daniell H."/>
        </authorList>
    </citation>
    <scope>NUCLEOTIDE SEQUENCE [LARGE SCALE GENOMIC DNA]</scope>
</reference>
<accession>B5LMQ1</accession>
<dbReference type="EMBL" id="EU835853">
    <property type="protein sequence ID" value="ACH41097.1"/>
    <property type="molecule type" value="Genomic_DNA"/>
</dbReference>
<dbReference type="RefSeq" id="YP_002149760.1">
    <property type="nucleotide sequence ID" value="NC_011163.1"/>
</dbReference>
<dbReference type="SMR" id="B5LMQ1"/>
<dbReference type="GeneID" id="6797567"/>
<dbReference type="KEGG" id="cam:6797567"/>
<dbReference type="OrthoDB" id="1336926at2759"/>
<dbReference type="Proteomes" id="UP000087171">
    <property type="component" value="Chloroplast Pltd"/>
</dbReference>
<dbReference type="GO" id="GO:0009535">
    <property type="term" value="C:chloroplast thylakoid membrane"/>
    <property type="evidence" value="ECO:0007669"/>
    <property type="project" value="UniProtKB-SubCell"/>
</dbReference>
<dbReference type="GO" id="GO:0015979">
    <property type="term" value="P:photosynthesis"/>
    <property type="evidence" value="ECO:0007669"/>
    <property type="project" value="InterPro"/>
</dbReference>
<dbReference type="HAMAP" id="MF_00293">
    <property type="entry name" value="PSII_PsbN"/>
    <property type="match status" value="1"/>
</dbReference>
<dbReference type="InterPro" id="IPR003398">
    <property type="entry name" value="PSII_PsbN"/>
</dbReference>
<dbReference type="PANTHER" id="PTHR35326">
    <property type="entry name" value="PROTEIN PSBN"/>
    <property type="match status" value="1"/>
</dbReference>
<dbReference type="PANTHER" id="PTHR35326:SF3">
    <property type="entry name" value="PROTEIN PSBN"/>
    <property type="match status" value="1"/>
</dbReference>
<dbReference type="Pfam" id="PF02468">
    <property type="entry name" value="PsbN"/>
    <property type="match status" value="1"/>
</dbReference>